<evidence type="ECO:0000255" key="1">
    <source>
        <dbReference type="HAMAP-Rule" id="MF_00101"/>
    </source>
</evidence>
<dbReference type="EC" id="2.7.8.7" evidence="1"/>
<dbReference type="EMBL" id="CP000383">
    <property type="protein sequence ID" value="ABG59389.1"/>
    <property type="molecule type" value="Genomic_DNA"/>
</dbReference>
<dbReference type="RefSeq" id="WP_011585506.1">
    <property type="nucleotide sequence ID" value="NC_008255.1"/>
</dbReference>
<dbReference type="SMR" id="Q11T75"/>
<dbReference type="STRING" id="269798.CHU_2126"/>
<dbReference type="KEGG" id="chu:CHU_2126"/>
<dbReference type="eggNOG" id="COG0736">
    <property type="taxonomic scope" value="Bacteria"/>
</dbReference>
<dbReference type="HOGENOM" id="CLU_089696_0_2_10"/>
<dbReference type="OrthoDB" id="517356at2"/>
<dbReference type="Proteomes" id="UP000001822">
    <property type="component" value="Chromosome"/>
</dbReference>
<dbReference type="GO" id="GO:0005737">
    <property type="term" value="C:cytoplasm"/>
    <property type="evidence" value="ECO:0007669"/>
    <property type="project" value="UniProtKB-SubCell"/>
</dbReference>
<dbReference type="GO" id="GO:0008897">
    <property type="term" value="F:holo-[acyl-carrier-protein] synthase activity"/>
    <property type="evidence" value="ECO:0007669"/>
    <property type="project" value="UniProtKB-UniRule"/>
</dbReference>
<dbReference type="GO" id="GO:0000287">
    <property type="term" value="F:magnesium ion binding"/>
    <property type="evidence" value="ECO:0007669"/>
    <property type="project" value="UniProtKB-UniRule"/>
</dbReference>
<dbReference type="GO" id="GO:0006633">
    <property type="term" value="P:fatty acid biosynthetic process"/>
    <property type="evidence" value="ECO:0007669"/>
    <property type="project" value="UniProtKB-UniRule"/>
</dbReference>
<dbReference type="Gene3D" id="3.90.470.20">
    <property type="entry name" value="4'-phosphopantetheinyl transferase domain"/>
    <property type="match status" value="1"/>
</dbReference>
<dbReference type="HAMAP" id="MF_00101">
    <property type="entry name" value="AcpS"/>
    <property type="match status" value="1"/>
</dbReference>
<dbReference type="InterPro" id="IPR008278">
    <property type="entry name" value="4-PPantetheinyl_Trfase_dom"/>
</dbReference>
<dbReference type="InterPro" id="IPR037143">
    <property type="entry name" value="4-PPantetheinyl_Trfase_dom_sf"/>
</dbReference>
<dbReference type="InterPro" id="IPR002582">
    <property type="entry name" value="ACPS"/>
</dbReference>
<dbReference type="InterPro" id="IPR004568">
    <property type="entry name" value="Ppantetheine-prot_Trfase_dom"/>
</dbReference>
<dbReference type="NCBIfam" id="TIGR00516">
    <property type="entry name" value="acpS"/>
    <property type="match status" value="1"/>
</dbReference>
<dbReference type="NCBIfam" id="TIGR00556">
    <property type="entry name" value="pantethn_trn"/>
    <property type="match status" value="1"/>
</dbReference>
<dbReference type="Pfam" id="PF01648">
    <property type="entry name" value="ACPS"/>
    <property type="match status" value="1"/>
</dbReference>
<dbReference type="SUPFAM" id="SSF56214">
    <property type="entry name" value="4'-phosphopantetheinyl transferase"/>
    <property type="match status" value="1"/>
</dbReference>
<gene>
    <name evidence="1" type="primary">acpS</name>
    <name type="ordered locus">CHU_2126</name>
</gene>
<keyword id="KW-0963">Cytoplasm</keyword>
<keyword id="KW-0275">Fatty acid biosynthesis</keyword>
<keyword id="KW-0276">Fatty acid metabolism</keyword>
<keyword id="KW-0444">Lipid biosynthesis</keyword>
<keyword id="KW-0443">Lipid metabolism</keyword>
<keyword id="KW-0460">Magnesium</keyword>
<keyword id="KW-0479">Metal-binding</keyword>
<keyword id="KW-1185">Reference proteome</keyword>
<keyword id="KW-0808">Transferase</keyword>
<comment type="function">
    <text evidence="1">Transfers the 4'-phosphopantetheine moiety from coenzyme A to a Ser of acyl-carrier-protein.</text>
</comment>
<comment type="catalytic activity">
    <reaction evidence="1">
        <text>apo-[ACP] + CoA = holo-[ACP] + adenosine 3',5'-bisphosphate + H(+)</text>
        <dbReference type="Rhea" id="RHEA:12068"/>
        <dbReference type="Rhea" id="RHEA-COMP:9685"/>
        <dbReference type="Rhea" id="RHEA-COMP:9690"/>
        <dbReference type="ChEBI" id="CHEBI:15378"/>
        <dbReference type="ChEBI" id="CHEBI:29999"/>
        <dbReference type="ChEBI" id="CHEBI:57287"/>
        <dbReference type="ChEBI" id="CHEBI:58343"/>
        <dbReference type="ChEBI" id="CHEBI:64479"/>
        <dbReference type="EC" id="2.7.8.7"/>
    </reaction>
</comment>
<comment type="cofactor">
    <cofactor evidence="1">
        <name>Mg(2+)</name>
        <dbReference type="ChEBI" id="CHEBI:18420"/>
    </cofactor>
</comment>
<comment type="subcellular location">
    <subcellularLocation>
        <location evidence="1">Cytoplasm</location>
    </subcellularLocation>
</comment>
<comment type="similarity">
    <text evidence="1">Belongs to the P-Pant transferase superfamily. AcpS family.</text>
</comment>
<feature type="chain" id="PRO_1000008418" description="Holo-[acyl-carrier-protein] synthase">
    <location>
        <begin position="1"/>
        <end position="127"/>
    </location>
</feature>
<feature type="binding site" evidence="1">
    <location>
        <position position="8"/>
    </location>
    <ligand>
        <name>Mg(2+)</name>
        <dbReference type="ChEBI" id="CHEBI:18420"/>
    </ligand>
</feature>
<feature type="binding site" evidence="1">
    <location>
        <position position="56"/>
    </location>
    <ligand>
        <name>Mg(2+)</name>
        <dbReference type="ChEBI" id="CHEBI:18420"/>
    </ligand>
</feature>
<sequence>MIQGIGVDIVDIARMQQRIDAASGFRELVFSPAEITYCESKANKYESYAARFAAKEAFLKAVGIGIDFSIDLNQIEITNNKAGKPYFVYTKQVEALLLTHIGFVPDAQVSLSHSREQAIAFVLFNKN</sequence>
<protein>
    <recommendedName>
        <fullName evidence="1">Holo-[acyl-carrier-protein] synthase</fullName>
        <shortName evidence="1">Holo-ACP synthase</shortName>
        <ecNumber evidence="1">2.7.8.7</ecNumber>
    </recommendedName>
    <alternativeName>
        <fullName evidence="1">4'-phosphopantetheinyl transferase AcpS</fullName>
    </alternativeName>
</protein>
<accession>Q11T75</accession>
<proteinExistence type="inferred from homology"/>
<organism>
    <name type="scientific">Cytophaga hutchinsonii (strain ATCC 33406 / DSM 1761 / CIP 103989 / NBRC 15051 / NCIMB 9469 / D465)</name>
    <dbReference type="NCBI Taxonomy" id="269798"/>
    <lineage>
        <taxon>Bacteria</taxon>
        <taxon>Pseudomonadati</taxon>
        <taxon>Bacteroidota</taxon>
        <taxon>Cytophagia</taxon>
        <taxon>Cytophagales</taxon>
        <taxon>Cytophagaceae</taxon>
        <taxon>Cytophaga</taxon>
    </lineage>
</organism>
<reference key="1">
    <citation type="journal article" date="2007" name="Appl. Environ. Microbiol.">
        <title>Genome sequence of the cellulolytic gliding bacterium Cytophaga hutchinsonii.</title>
        <authorList>
            <person name="Xie G."/>
            <person name="Bruce D.C."/>
            <person name="Challacombe J.F."/>
            <person name="Chertkov O."/>
            <person name="Detter J.C."/>
            <person name="Gilna P."/>
            <person name="Han C.S."/>
            <person name="Lucas S."/>
            <person name="Misra M."/>
            <person name="Myers G.L."/>
            <person name="Richardson P."/>
            <person name="Tapia R."/>
            <person name="Thayer N."/>
            <person name="Thompson L.S."/>
            <person name="Brettin T.S."/>
            <person name="Henrissat B."/>
            <person name="Wilson D.B."/>
            <person name="McBride M.J."/>
        </authorList>
    </citation>
    <scope>NUCLEOTIDE SEQUENCE [LARGE SCALE GENOMIC DNA]</scope>
    <source>
        <strain>ATCC 33406 / DSM 1761 / JCM 20678 / CIP 103989 / IAM 12607 / NBRC 15051 / NCIMB 9469 / D465</strain>
    </source>
</reference>
<name>ACPS_CYTH3</name>